<name>SURF4_BOVIN</name>
<reference key="1">
    <citation type="submission" date="2007-07" db="EMBL/GenBank/DDBJ databases">
        <authorList>
            <consortium name="NIH - Mammalian Gene Collection (MGC) project"/>
        </authorList>
    </citation>
    <scope>NUCLEOTIDE SEQUENCE [LARGE SCALE MRNA]</scope>
    <source>
        <strain>Hereford</strain>
        <tissue>Thymus</tissue>
    </source>
</reference>
<dbReference type="EMBL" id="BC151306">
    <property type="protein sequence ID" value="AAI51307.1"/>
    <property type="molecule type" value="mRNA"/>
</dbReference>
<dbReference type="RefSeq" id="NP_001095979.1">
    <property type="nucleotide sequence ID" value="NM_001102509.1"/>
</dbReference>
<dbReference type="FunCoup" id="A7YY49">
    <property type="interactions" value="2453"/>
</dbReference>
<dbReference type="STRING" id="9913.ENSBTAP00000066752"/>
<dbReference type="PeptideAtlas" id="A7YY49"/>
<dbReference type="GeneID" id="526045"/>
<dbReference type="KEGG" id="bta:526045"/>
<dbReference type="CTD" id="6836"/>
<dbReference type="VEuPathDB" id="HostDB:ENSBTAG00000051352"/>
<dbReference type="InParanoid" id="A7YY49"/>
<dbReference type="OMA" id="SSPRQYM"/>
<dbReference type="OrthoDB" id="7859621at2759"/>
<dbReference type="Reactome" id="R-BTA-6798695">
    <property type="pathway name" value="Neutrophil degranulation"/>
</dbReference>
<dbReference type="Reactome" id="R-BTA-6811434">
    <property type="pathway name" value="COPI-dependent Golgi-to-ER retrograde traffic"/>
</dbReference>
<dbReference type="Proteomes" id="UP000009136">
    <property type="component" value="Chromosome 11"/>
</dbReference>
<dbReference type="Bgee" id="ENSBTAG00000051352">
    <property type="expression patterns" value="Expressed in saliva-secreting gland and 108 other cell types or tissues"/>
</dbReference>
<dbReference type="GO" id="GO:0005783">
    <property type="term" value="C:endoplasmic reticulum"/>
    <property type="evidence" value="ECO:0000318"/>
    <property type="project" value="GO_Central"/>
</dbReference>
<dbReference type="GO" id="GO:0005789">
    <property type="term" value="C:endoplasmic reticulum membrane"/>
    <property type="evidence" value="ECO:0007669"/>
    <property type="project" value="UniProtKB-SubCell"/>
</dbReference>
<dbReference type="GO" id="GO:0005793">
    <property type="term" value="C:endoplasmic reticulum-Golgi intermediate compartment"/>
    <property type="evidence" value="ECO:0000318"/>
    <property type="project" value="GO_Central"/>
</dbReference>
<dbReference type="GO" id="GO:0033116">
    <property type="term" value="C:endoplasmic reticulum-Golgi intermediate compartment membrane"/>
    <property type="evidence" value="ECO:0007669"/>
    <property type="project" value="UniProtKB-SubCell"/>
</dbReference>
<dbReference type="GO" id="GO:0000139">
    <property type="term" value="C:Golgi membrane"/>
    <property type="evidence" value="ECO:0007669"/>
    <property type="project" value="UniProtKB-SubCell"/>
</dbReference>
<dbReference type="GO" id="GO:0038024">
    <property type="term" value="F:cargo receptor activity"/>
    <property type="evidence" value="ECO:0000250"/>
    <property type="project" value="UniProtKB"/>
</dbReference>
<dbReference type="GO" id="GO:0006888">
    <property type="term" value="P:endoplasmic reticulum to Golgi vesicle-mediated transport"/>
    <property type="evidence" value="ECO:0000250"/>
    <property type="project" value="UniProtKB"/>
</dbReference>
<dbReference type="GO" id="GO:0007030">
    <property type="term" value="P:Golgi organization"/>
    <property type="evidence" value="ECO:0000318"/>
    <property type="project" value="GO_Central"/>
</dbReference>
<dbReference type="GO" id="GO:0055088">
    <property type="term" value="P:lipid homeostasis"/>
    <property type="evidence" value="ECO:0000250"/>
    <property type="project" value="UniProtKB"/>
</dbReference>
<dbReference type="GO" id="GO:0042953">
    <property type="term" value="P:lipoprotein transport"/>
    <property type="evidence" value="ECO:0000250"/>
    <property type="project" value="UniProtKB"/>
</dbReference>
<dbReference type="GO" id="GO:0032368">
    <property type="term" value="P:regulation of lipid transport"/>
    <property type="evidence" value="ECO:0000250"/>
    <property type="project" value="UniProtKB"/>
</dbReference>
<dbReference type="InterPro" id="IPR045214">
    <property type="entry name" value="Surf1/Surf4"/>
</dbReference>
<dbReference type="InterPro" id="IPR002995">
    <property type="entry name" value="Surf4"/>
</dbReference>
<dbReference type="PANTHER" id="PTHR23427">
    <property type="entry name" value="SURFEIT LOCUS PROTEIN"/>
    <property type="match status" value="1"/>
</dbReference>
<dbReference type="PANTHER" id="PTHR23427:SF13">
    <property type="entry name" value="SURFEIT LOCUS PROTEIN 4"/>
    <property type="match status" value="1"/>
</dbReference>
<dbReference type="Pfam" id="PF02077">
    <property type="entry name" value="SURF4"/>
    <property type="match status" value="1"/>
</dbReference>
<dbReference type="PROSITE" id="PS01339">
    <property type="entry name" value="SURF4"/>
    <property type="match status" value="1"/>
</dbReference>
<protein>
    <recommendedName>
        <fullName evidence="4">Surfeit locus protein 4</fullName>
    </recommendedName>
</protein>
<accession>A7YY49</accession>
<organism>
    <name type="scientific">Bos taurus</name>
    <name type="common">Bovine</name>
    <dbReference type="NCBI Taxonomy" id="9913"/>
    <lineage>
        <taxon>Eukaryota</taxon>
        <taxon>Metazoa</taxon>
        <taxon>Chordata</taxon>
        <taxon>Craniata</taxon>
        <taxon>Vertebrata</taxon>
        <taxon>Euteleostomi</taxon>
        <taxon>Mammalia</taxon>
        <taxon>Eutheria</taxon>
        <taxon>Laurasiatheria</taxon>
        <taxon>Artiodactyla</taxon>
        <taxon>Ruminantia</taxon>
        <taxon>Pecora</taxon>
        <taxon>Bovidae</taxon>
        <taxon>Bovinae</taxon>
        <taxon>Bos</taxon>
    </lineage>
</organism>
<comment type="function">
    <text evidence="1">Endoplasmic reticulum cargo receptor that mediates the export of lipoproteins by recruiting cargos into COPII vesicles to facilitate their secretion. Acts as a cargo receptor for lipoproteins bearing both APOB and APOA1, thereby regulating lipoprotein delivery and the maintenance of lipid homeostasis. Synergizes with the GTPase SAR1B to mediate transport of circulating lipoproteins. Promotes the secretion of PCSK9. Also mediates the efficient secretion of erythropoietin (EPO). May also play a role in the maintenance of the architecture of the endoplasmic reticulum-Golgi intermediate compartment and of the Golgi.</text>
</comment>
<comment type="subunit">
    <text evidence="1 2">Found in a complex composed at least of SURF4, TMED2 and TMED10. May interact with LMAN1 (By similarity). Interacts with ZFYVE27 and with KIF5A in a ZFYVE27-dependent manner (By similarity). Interacts with STING1. Interacts with SAR1B. Interacts with TMEM41B (By similarity).</text>
</comment>
<comment type="subcellular location">
    <subcellularLocation>
        <location evidence="1">Endoplasmic reticulum membrane</location>
        <topology evidence="3">Multi-pass membrane protein</topology>
    </subcellularLocation>
    <subcellularLocation>
        <location evidence="1">Endoplasmic reticulum-Golgi intermediate compartment membrane</location>
        <topology evidence="3">Multi-pass membrane protein</topology>
    </subcellularLocation>
    <subcellularLocation>
        <location evidence="1">Golgi apparatus membrane</location>
        <topology evidence="3">Multi-pass membrane protein</topology>
    </subcellularLocation>
    <text evidence="1">Active at endoplasmic reticulum exit sites (ERES) where it is incorporated together with its lipoprotein cargos into COPII-coated vesicles. From the Golgi it is recycled back to the endoplasmic reticulum.</text>
</comment>
<comment type="domain">
    <text evidence="1">The di-lysine motif confers endoplasmic reticulum localization for type I membrane proteins.</text>
</comment>
<comment type="similarity">
    <text evidence="4">Belongs to the SURF4 family.</text>
</comment>
<gene>
    <name evidence="1" type="primary">SURF4</name>
</gene>
<feature type="chain" id="PRO_0000350581" description="Surfeit locus protein 4">
    <location>
        <begin position="1"/>
        <end position="269"/>
    </location>
</feature>
<feature type="transmembrane region" description="Helical" evidence="3">
    <location>
        <begin position="64"/>
        <end position="84"/>
    </location>
</feature>
<feature type="transmembrane region" description="Helical" evidence="3">
    <location>
        <begin position="92"/>
        <end position="112"/>
    </location>
</feature>
<feature type="transmembrane region" description="Helical" evidence="3">
    <location>
        <begin position="179"/>
        <end position="199"/>
    </location>
</feature>
<feature type="transmembrane region" description="Helical" evidence="3">
    <location>
        <begin position="203"/>
        <end position="223"/>
    </location>
</feature>
<feature type="transmembrane region" description="Helical" evidence="3">
    <location>
        <begin position="239"/>
        <end position="259"/>
    </location>
</feature>
<feature type="short sequence motif" description="Di-lysine motif" evidence="1">
    <location>
        <begin position="266"/>
        <end position="269"/>
    </location>
</feature>
<keyword id="KW-0256">Endoplasmic reticulum</keyword>
<keyword id="KW-0333">Golgi apparatus</keyword>
<keyword id="KW-0472">Membrane</keyword>
<keyword id="KW-0653">Protein transport</keyword>
<keyword id="KW-1185">Reference proteome</keyword>
<keyword id="KW-0812">Transmembrane</keyword>
<keyword id="KW-1133">Transmembrane helix</keyword>
<keyword id="KW-0813">Transport</keyword>
<proteinExistence type="evidence at transcript level"/>
<evidence type="ECO:0000250" key="1">
    <source>
        <dbReference type="UniProtKB" id="O15260"/>
    </source>
</evidence>
<evidence type="ECO:0000250" key="2">
    <source>
        <dbReference type="UniProtKB" id="Q64310"/>
    </source>
</evidence>
<evidence type="ECO:0000255" key="3"/>
<evidence type="ECO:0000305" key="4"/>
<sequence>MGQNDLMGTAEDFADQFLRVTKQYLPHVARLCLISTFLEDGIRMWFQWSEQRDYIDTTWNCGYLLASSFVFLNLLGQLTGCILVLSRNFVQYACFGLFGIIALQTIAYSILWDLKFLMRNLALGGGLLLLLAESRSEGKSMFAGVPTMRESSPKQYMQLGGRVLLVLMFMTLLHFDASFFSILQNIVGTALMILVAIGFKTKLAALTLVVWLFAINVYFNAFWTIPVYKPMHDFLKYDFFQTMSVIGGLLLVVALGPGGVSMDEKKKEW</sequence>